<gene>
    <name type="primary">FAXC</name>
    <name type="synonym">C6orf168</name>
</gene>
<accession>Q5TGI0</accession>
<accession>B3KU39</accession>
<accession>Q96F61</accession>
<accession>Q96LU3</accession>
<accession>Q9BR58</accession>
<accession>Q9BSS2</accession>
<comment type="function">
    <text evidence="1">May play a role in axonal development.</text>
</comment>
<comment type="subcellular location">
    <subcellularLocation>
        <location evidence="5">Membrane</location>
        <topology evidence="5">Single-pass membrane protein</topology>
    </subcellularLocation>
</comment>
<comment type="alternative products">
    <event type="alternative splicing"/>
    <isoform>
        <id>Q5TGI0-1</id>
        <name>1</name>
        <sequence type="displayed"/>
    </isoform>
    <isoform>
        <id>Q5TGI0-2</id>
        <name>2</name>
        <sequence type="described" ref="VSP_056994"/>
    </isoform>
</comment>
<comment type="similarity">
    <text evidence="5">Belongs to the FAX family.</text>
</comment>
<comment type="sequence caution" evidence="5">
    <conflict type="erroneous initiation">
        <sequence resource="EMBL-CDS" id="BAB71576"/>
    </conflict>
    <text>Truncated N-terminus.</text>
</comment>
<name>FAXC_HUMAN</name>
<evidence type="ECO:0000250" key="1"/>
<evidence type="ECO:0000255" key="2"/>
<evidence type="ECO:0000256" key="3">
    <source>
        <dbReference type="SAM" id="MobiDB-lite"/>
    </source>
</evidence>
<evidence type="ECO:0000303" key="4">
    <source>
    </source>
</evidence>
<evidence type="ECO:0000305" key="5"/>
<feature type="chain" id="PRO_0000089556" description="Failed axon connections homolog">
    <location>
        <begin position="1"/>
        <end position="409"/>
    </location>
</feature>
<feature type="transmembrane region" description="Helical" evidence="2">
    <location>
        <begin position="68"/>
        <end position="88"/>
    </location>
</feature>
<feature type="region of interest" description="Disordered" evidence="3">
    <location>
        <begin position="372"/>
        <end position="409"/>
    </location>
</feature>
<feature type="splice variant" id="VSP_056994" description="In isoform 2." evidence="4">
    <location>
        <begin position="1"/>
        <end position="280"/>
    </location>
</feature>
<proteinExistence type="evidence at protein level"/>
<organism>
    <name type="scientific">Homo sapiens</name>
    <name type="common">Human</name>
    <dbReference type="NCBI Taxonomy" id="9606"/>
    <lineage>
        <taxon>Eukaryota</taxon>
        <taxon>Metazoa</taxon>
        <taxon>Chordata</taxon>
        <taxon>Craniata</taxon>
        <taxon>Vertebrata</taxon>
        <taxon>Euteleostomi</taxon>
        <taxon>Mammalia</taxon>
        <taxon>Eutheria</taxon>
        <taxon>Euarchontoglires</taxon>
        <taxon>Primates</taxon>
        <taxon>Haplorrhini</taxon>
        <taxon>Catarrhini</taxon>
        <taxon>Hominidae</taxon>
        <taxon>Homo</taxon>
    </lineage>
</organism>
<protein>
    <recommendedName>
        <fullName>Failed axon connections homolog</fullName>
    </recommendedName>
</protein>
<dbReference type="EMBL" id="AK057793">
    <property type="protein sequence ID" value="BAB71576.1"/>
    <property type="status" value="ALT_INIT"/>
    <property type="molecule type" value="mRNA"/>
</dbReference>
<dbReference type="EMBL" id="AK096480">
    <property type="protein sequence ID" value="BAG53301.1"/>
    <property type="molecule type" value="mRNA"/>
</dbReference>
<dbReference type="EMBL" id="AL034371">
    <property type="status" value="NOT_ANNOTATED_CDS"/>
    <property type="molecule type" value="Genomic_DNA"/>
</dbReference>
<dbReference type="EMBL" id="CH471051">
    <property type="protein sequence ID" value="EAW48484.1"/>
    <property type="molecule type" value="Genomic_DNA"/>
</dbReference>
<dbReference type="EMBL" id="BC004869">
    <property type="protein sequence ID" value="AAH04869.2"/>
    <property type="molecule type" value="mRNA"/>
</dbReference>
<dbReference type="EMBL" id="BC006515">
    <property type="protein sequence ID" value="AAH06515.1"/>
    <property type="molecule type" value="mRNA"/>
</dbReference>
<dbReference type="EMBL" id="BC011583">
    <property type="protein sequence ID" value="AAH11583.1"/>
    <property type="molecule type" value="mRNA"/>
</dbReference>
<dbReference type="CCDS" id="CCDS34500.1">
    <molecule id="Q5TGI0-1"/>
</dbReference>
<dbReference type="RefSeq" id="NP_001333459.1">
    <property type="nucleotide sequence ID" value="NM_001346530.1"/>
</dbReference>
<dbReference type="RefSeq" id="NP_001333462.1">
    <property type="nucleotide sequence ID" value="NM_001346533.1"/>
</dbReference>
<dbReference type="RefSeq" id="NP_115900.1">
    <molecule id="Q5TGI0-1"/>
    <property type="nucleotide sequence ID" value="NM_032511.4"/>
</dbReference>
<dbReference type="SMR" id="Q5TGI0"/>
<dbReference type="BioGRID" id="124136">
    <property type="interactions" value="119"/>
</dbReference>
<dbReference type="FunCoup" id="Q5TGI0">
    <property type="interactions" value="685"/>
</dbReference>
<dbReference type="IntAct" id="Q5TGI0">
    <property type="interactions" value="110"/>
</dbReference>
<dbReference type="STRING" id="9606.ENSP00000374328"/>
<dbReference type="iPTMnet" id="Q5TGI0"/>
<dbReference type="PhosphoSitePlus" id="Q5TGI0"/>
<dbReference type="BioMuta" id="FAXC"/>
<dbReference type="DMDM" id="73917723"/>
<dbReference type="MassIVE" id="Q5TGI0"/>
<dbReference type="PaxDb" id="9606-ENSP00000374328"/>
<dbReference type="PeptideAtlas" id="Q5TGI0"/>
<dbReference type="ProteomicsDB" id="65119">
    <molecule id="Q5TGI0-1"/>
</dbReference>
<dbReference type="ProteomicsDB" id="78744"/>
<dbReference type="Antibodypedia" id="48407">
    <property type="antibodies" value="48 antibodies from 10 providers"/>
</dbReference>
<dbReference type="DNASU" id="84553"/>
<dbReference type="Ensembl" id="ENST00000389677.6">
    <molecule id="Q5TGI0-1"/>
    <property type="protein sequence ID" value="ENSP00000374328.4"/>
    <property type="gene ID" value="ENSG00000146267.12"/>
</dbReference>
<dbReference type="Ensembl" id="ENST00000538471.1">
    <molecule id="Q5TGI0-2"/>
    <property type="protein sequence ID" value="ENSP00000445267.1"/>
    <property type="gene ID" value="ENSG00000146267.12"/>
</dbReference>
<dbReference type="GeneID" id="84553"/>
<dbReference type="KEGG" id="hsa:84553"/>
<dbReference type="MANE-Select" id="ENST00000389677.6">
    <property type="protein sequence ID" value="ENSP00000374328.4"/>
    <property type="RefSeq nucleotide sequence ID" value="NM_032511.4"/>
    <property type="RefSeq protein sequence ID" value="NP_115900.1"/>
</dbReference>
<dbReference type="UCSC" id="uc003ppi.5">
    <molecule id="Q5TGI0-1"/>
    <property type="organism name" value="human"/>
</dbReference>
<dbReference type="AGR" id="HGNC:20742"/>
<dbReference type="CTD" id="84553"/>
<dbReference type="DisGeNET" id="84553"/>
<dbReference type="GeneCards" id="FAXC"/>
<dbReference type="HGNC" id="HGNC:20742">
    <property type="gene designation" value="FAXC"/>
</dbReference>
<dbReference type="HPA" id="ENSG00000146267">
    <property type="expression patterns" value="Tissue enhanced (intestine)"/>
</dbReference>
<dbReference type="MalaCards" id="FAXC"/>
<dbReference type="neXtProt" id="NX_Q5TGI0"/>
<dbReference type="OpenTargets" id="ENSG00000146267"/>
<dbReference type="PharmGKB" id="PA134918761"/>
<dbReference type="VEuPathDB" id="HostDB:ENSG00000146267"/>
<dbReference type="eggNOG" id="KOG4244">
    <property type="taxonomic scope" value="Eukaryota"/>
</dbReference>
<dbReference type="GeneTree" id="ENSGT00950000182919"/>
<dbReference type="HOGENOM" id="CLU_044137_2_0_1"/>
<dbReference type="InParanoid" id="Q5TGI0"/>
<dbReference type="OMA" id="HLYTIAY"/>
<dbReference type="OrthoDB" id="5809458at2759"/>
<dbReference type="PAN-GO" id="Q5TGI0">
    <property type="GO annotations" value="1 GO annotation based on evolutionary models"/>
</dbReference>
<dbReference type="PhylomeDB" id="Q5TGI0"/>
<dbReference type="TreeFam" id="TF314915"/>
<dbReference type="PathwayCommons" id="Q5TGI0"/>
<dbReference type="BioGRID-ORCS" id="84553">
    <property type="hits" value="13 hits in 1137 CRISPR screens"/>
</dbReference>
<dbReference type="ChiTaRS" id="FAXC">
    <property type="organism name" value="human"/>
</dbReference>
<dbReference type="GenomeRNAi" id="84553"/>
<dbReference type="Pharos" id="Q5TGI0">
    <property type="development level" value="Tdark"/>
</dbReference>
<dbReference type="PRO" id="PR:Q5TGI0"/>
<dbReference type="Proteomes" id="UP000005640">
    <property type="component" value="Chromosome 6"/>
</dbReference>
<dbReference type="RNAct" id="Q5TGI0">
    <property type="molecule type" value="protein"/>
</dbReference>
<dbReference type="Bgee" id="ENSG00000146267">
    <property type="expression patterns" value="Expressed in cortical plate and 129 other cell types or tissues"/>
</dbReference>
<dbReference type="GO" id="GO:0005737">
    <property type="term" value="C:cytoplasm"/>
    <property type="evidence" value="ECO:0000318"/>
    <property type="project" value="GO_Central"/>
</dbReference>
<dbReference type="GO" id="GO:0016020">
    <property type="term" value="C:membrane"/>
    <property type="evidence" value="ECO:0007669"/>
    <property type="project" value="UniProtKB-SubCell"/>
</dbReference>
<dbReference type="CDD" id="cd03193">
    <property type="entry name" value="GST_C_Metaxin"/>
    <property type="match status" value="1"/>
</dbReference>
<dbReference type="CDD" id="cd03080">
    <property type="entry name" value="GST_N_Metaxin_like"/>
    <property type="match status" value="1"/>
</dbReference>
<dbReference type="InterPro" id="IPR026928">
    <property type="entry name" value="FAX/IsoI-like"/>
</dbReference>
<dbReference type="InterPro" id="IPR045796">
    <property type="entry name" value="FAXC_N"/>
</dbReference>
<dbReference type="InterPro" id="IPR036282">
    <property type="entry name" value="Glutathione-S-Trfase_C_sf"/>
</dbReference>
<dbReference type="InterPro" id="IPR033468">
    <property type="entry name" value="Metaxin_GST"/>
</dbReference>
<dbReference type="InterPro" id="IPR050931">
    <property type="entry name" value="Mito_Protein_Transport_Metaxin"/>
</dbReference>
<dbReference type="InterPro" id="IPR012336">
    <property type="entry name" value="Thioredoxin-like_fold"/>
</dbReference>
<dbReference type="InterPro" id="IPR036249">
    <property type="entry name" value="Thioredoxin-like_sf"/>
</dbReference>
<dbReference type="PANTHER" id="PTHR12289:SF76">
    <property type="entry name" value="FAILED AXON CONNECTIONS HOMOLOG"/>
    <property type="match status" value="1"/>
</dbReference>
<dbReference type="PANTHER" id="PTHR12289">
    <property type="entry name" value="METAXIN RELATED"/>
    <property type="match status" value="1"/>
</dbReference>
<dbReference type="Pfam" id="PF19333">
    <property type="entry name" value="FAXC_N"/>
    <property type="match status" value="1"/>
</dbReference>
<dbReference type="Pfam" id="PF17171">
    <property type="entry name" value="GST_C_6"/>
    <property type="match status" value="1"/>
</dbReference>
<dbReference type="Pfam" id="PF17172">
    <property type="entry name" value="GST_N_4"/>
    <property type="match status" value="1"/>
</dbReference>
<dbReference type="SFLD" id="SFLDG01180">
    <property type="entry name" value="SUF1"/>
    <property type="match status" value="1"/>
</dbReference>
<dbReference type="SFLD" id="SFLDG01200">
    <property type="entry name" value="SUF1.1"/>
    <property type="match status" value="1"/>
</dbReference>
<dbReference type="SUPFAM" id="SSF47616">
    <property type="entry name" value="GST C-terminal domain-like"/>
    <property type="match status" value="1"/>
</dbReference>
<dbReference type="SUPFAM" id="SSF52833">
    <property type="entry name" value="Thioredoxin-like"/>
    <property type="match status" value="1"/>
</dbReference>
<reference key="1">
    <citation type="journal article" date="2004" name="Nat. Genet.">
        <title>Complete sequencing and characterization of 21,243 full-length human cDNAs.</title>
        <authorList>
            <person name="Ota T."/>
            <person name="Suzuki Y."/>
            <person name="Nishikawa T."/>
            <person name="Otsuki T."/>
            <person name="Sugiyama T."/>
            <person name="Irie R."/>
            <person name="Wakamatsu A."/>
            <person name="Hayashi K."/>
            <person name="Sato H."/>
            <person name="Nagai K."/>
            <person name="Kimura K."/>
            <person name="Makita H."/>
            <person name="Sekine M."/>
            <person name="Obayashi M."/>
            <person name="Nishi T."/>
            <person name="Shibahara T."/>
            <person name="Tanaka T."/>
            <person name="Ishii S."/>
            <person name="Yamamoto J."/>
            <person name="Saito K."/>
            <person name="Kawai Y."/>
            <person name="Isono Y."/>
            <person name="Nakamura Y."/>
            <person name="Nagahari K."/>
            <person name="Murakami K."/>
            <person name="Yasuda T."/>
            <person name="Iwayanagi T."/>
            <person name="Wagatsuma M."/>
            <person name="Shiratori A."/>
            <person name="Sudo H."/>
            <person name="Hosoiri T."/>
            <person name="Kaku Y."/>
            <person name="Kodaira H."/>
            <person name="Kondo H."/>
            <person name="Sugawara M."/>
            <person name="Takahashi M."/>
            <person name="Kanda K."/>
            <person name="Yokoi T."/>
            <person name="Furuya T."/>
            <person name="Kikkawa E."/>
            <person name="Omura Y."/>
            <person name="Abe K."/>
            <person name="Kamihara K."/>
            <person name="Katsuta N."/>
            <person name="Sato K."/>
            <person name="Tanikawa M."/>
            <person name="Yamazaki M."/>
            <person name="Ninomiya K."/>
            <person name="Ishibashi T."/>
            <person name="Yamashita H."/>
            <person name="Murakawa K."/>
            <person name="Fujimori K."/>
            <person name="Tanai H."/>
            <person name="Kimata M."/>
            <person name="Watanabe M."/>
            <person name="Hiraoka S."/>
            <person name="Chiba Y."/>
            <person name="Ishida S."/>
            <person name="Ono Y."/>
            <person name="Takiguchi S."/>
            <person name="Watanabe S."/>
            <person name="Yosida M."/>
            <person name="Hotuta T."/>
            <person name="Kusano J."/>
            <person name="Kanehori K."/>
            <person name="Takahashi-Fujii A."/>
            <person name="Hara H."/>
            <person name="Tanase T.-O."/>
            <person name="Nomura Y."/>
            <person name="Togiya S."/>
            <person name="Komai F."/>
            <person name="Hara R."/>
            <person name="Takeuchi K."/>
            <person name="Arita M."/>
            <person name="Imose N."/>
            <person name="Musashino K."/>
            <person name="Yuuki H."/>
            <person name="Oshima A."/>
            <person name="Sasaki N."/>
            <person name="Aotsuka S."/>
            <person name="Yoshikawa Y."/>
            <person name="Matsunawa H."/>
            <person name="Ichihara T."/>
            <person name="Shiohata N."/>
            <person name="Sano S."/>
            <person name="Moriya S."/>
            <person name="Momiyama H."/>
            <person name="Satoh N."/>
            <person name="Takami S."/>
            <person name="Terashima Y."/>
            <person name="Suzuki O."/>
            <person name="Nakagawa S."/>
            <person name="Senoh A."/>
            <person name="Mizoguchi H."/>
            <person name="Goto Y."/>
            <person name="Shimizu F."/>
            <person name="Wakebe H."/>
            <person name="Hishigaki H."/>
            <person name="Watanabe T."/>
            <person name="Sugiyama A."/>
            <person name="Takemoto M."/>
            <person name="Kawakami B."/>
            <person name="Yamazaki M."/>
            <person name="Watanabe K."/>
            <person name="Kumagai A."/>
            <person name="Itakura S."/>
            <person name="Fukuzumi Y."/>
            <person name="Fujimori Y."/>
            <person name="Komiyama M."/>
            <person name="Tashiro H."/>
            <person name="Tanigami A."/>
            <person name="Fujiwara T."/>
            <person name="Ono T."/>
            <person name="Yamada K."/>
            <person name="Fujii Y."/>
            <person name="Ozaki K."/>
            <person name="Hirao M."/>
            <person name="Ohmori Y."/>
            <person name="Kawabata A."/>
            <person name="Hikiji T."/>
            <person name="Kobatake N."/>
            <person name="Inagaki H."/>
            <person name="Ikema Y."/>
            <person name="Okamoto S."/>
            <person name="Okitani R."/>
            <person name="Kawakami T."/>
            <person name="Noguchi S."/>
            <person name="Itoh T."/>
            <person name="Shigeta K."/>
            <person name="Senba T."/>
            <person name="Matsumura K."/>
            <person name="Nakajima Y."/>
            <person name="Mizuno T."/>
            <person name="Morinaga M."/>
            <person name="Sasaki M."/>
            <person name="Togashi T."/>
            <person name="Oyama M."/>
            <person name="Hata H."/>
            <person name="Watanabe M."/>
            <person name="Komatsu T."/>
            <person name="Mizushima-Sugano J."/>
            <person name="Satoh T."/>
            <person name="Shirai Y."/>
            <person name="Takahashi Y."/>
            <person name="Nakagawa K."/>
            <person name="Okumura K."/>
            <person name="Nagase T."/>
            <person name="Nomura N."/>
            <person name="Kikuchi H."/>
            <person name="Masuho Y."/>
            <person name="Yamashita R."/>
            <person name="Nakai K."/>
            <person name="Yada T."/>
            <person name="Nakamura Y."/>
            <person name="Ohara O."/>
            <person name="Isogai T."/>
            <person name="Sugano S."/>
        </authorList>
    </citation>
    <scope>NUCLEOTIDE SEQUENCE [LARGE SCALE MRNA] (ISOFORM 1)</scope>
    <source>
        <tissue>Brain</tissue>
    </source>
</reference>
<reference key="2">
    <citation type="journal article" date="2003" name="Nature">
        <title>The DNA sequence and analysis of human chromosome 6.</title>
        <authorList>
            <person name="Mungall A.J."/>
            <person name="Palmer S.A."/>
            <person name="Sims S.K."/>
            <person name="Edwards C.A."/>
            <person name="Ashurst J.L."/>
            <person name="Wilming L."/>
            <person name="Jones M.C."/>
            <person name="Horton R."/>
            <person name="Hunt S.E."/>
            <person name="Scott C.E."/>
            <person name="Gilbert J.G.R."/>
            <person name="Clamp M.E."/>
            <person name="Bethel G."/>
            <person name="Milne S."/>
            <person name="Ainscough R."/>
            <person name="Almeida J.P."/>
            <person name="Ambrose K.D."/>
            <person name="Andrews T.D."/>
            <person name="Ashwell R.I.S."/>
            <person name="Babbage A.K."/>
            <person name="Bagguley C.L."/>
            <person name="Bailey J."/>
            <person name="Banerjee R."/>
            <person name="Barker D.J."/>
            <person name="Barlow K.F."/>
            <person name="Bates K."/>
            <person name="Beare D.M."/>
            <person name="Beasley H."/>
            <person name="Beasley O."/>
            <person name="Bird C.P."/>
            <person name="Blakey S.E."/>
            <person name="Bray-Allen S."/>
            <person name="Brook J."/>
            <person name="Brown A.J."/>
            <person name="Brown J.Y."/>
            <person name="Burford D.C."/>
            <person name="Burrill W."/>
            <person name="Burton J."/>
            <person name="Carder C."/>
            <person name="Carter N.P."/>
            <person name="Chapman J.C."/>
            <person name="Clark S.Y."/>
            <person name="Clark G."/>
            <person name="Clee C.M."/>
            <person name="Clegg S."/>
            <person name="Cobley V."/>
            <person name="Collier R.E."/>
            <person name="Collins J.E."/>
            <person name="Colman L.K."/>
            <person name="Corby N.R."/>
            <person name="Coville G.J."/>
            <person name="Culley K.M."/>
            <person name="Dhami P."/>
            <person name="Davies J."/>
            <person name="Dunn M."/>
            <person name="Earthrowl M.E."/>
            <person name="Ellington A.E."/>
            <person name="Evans K.A."/>
            <person name="Faulkner L."/>
            <person name="Francis M.D."/>
            <person name="Frankish A."/>
            <person name="Frankland J."/>
            <person name="French L."/>
            <person name="Garner P."/>
            <person name="Garnett J."/>
            <person name="Ghori M.J."/>
            <person name="Gilby L.M."/>
            <person name="Gillson C.J."/>
            <person name="Glithero R.J."/>
            <person name="Grafham D.V."/>
            <person name="Grant M."/>
            <person name="Gribble S."/>
            <person name="Griffiths C."/>
            <person name="Griffiths M.N.D."/>
            <person name="Hall R."/>
            <person name="Halls K.S."/>
            <person name="Hammond S."/>
            <person name="Harley J.L."/>
            <person name="Hart E.A."/>
            <person name="Heath P.D."/>
            <person name="Heathcott R."/>
            <person name="Holmes S.J."/>
            <person name="Howden P.J."/>
            <person name="Howe K.L."/>
            <person name="Howell G.R."/>
            <person name="Huckle E."/>
            <person name="Humphray S.J."/>
            <person name="Humphries M.D."/>
            <person name="Hunt A.R."/>
            <person name="Johnson C.M."/>
            <person name="Joy A.A."/>
            <person name="Kay M."/>
            <person name="Keenan S.J."/>
            <person name="Kimberley A.M."/>
            <person name="King A."/>
            <person name="Laird G.K."/>
            <person name="Langford C."/>
            <person name="Lawlor S."/>
            <person name="Leongamornlert D.A."/>
            <person name="Leversha M."/>
            <person name="Lloyd C.R."/>
            <person name="Lloyd D.M."/>
            <person name="Loveland J.E."/>
            <person name="Lovell J."/>
            <person name="Martin S."/>
            <person name="Mashreghi-Mohammadi M."/>
            <person name="Maslen G.L."/>
            <person name="Matthews L."/>
            <person name="McCann O.T."/>
            <person name="McLaren S.J."/>
            <person name="McLay K."/>
            <person name="McMurray A."/>
            <person name="Moore M.J.F."/>
            <person name="Mullikin J.C."/>
            <person name="Niblett D."/>
            <person name="Nickerson T."/>
            <person name="Novik K.L."/>
            <person name="Oliver K."/>
            <person name="Overton-Larty E.K."/>
            <person name="Parker A."/>
            <person name="Patel R."/>
            <person name="Pearce A.V."/>
            <person name="Peck A.I."/>
            <person name="Phillimore B.J.C.T."/>
            <person name="Phillips S."/>
            <person name="Plumb R.W."/>
            <person name="Porter K.M."/>
            <person name="Ramsey Y."/>
            <person name="Ranby S.A."/>
            <person name="Rice C.M."/>
            <person name="Ross M.T."/>
            <person name="Searle S.M."/>
            <person name="Sehra H.K."/>
            <person name="Sheridan E."/>
            <person name="Skuce C.D."/>
            <person name="Smith S."/>
            <person name="Smith M."/>
            <person name="Spraggon L."/>
            <person name="Squares S.L."/>
            <person name="Steward C.A."/>
            <person name="Sycamore N."/>
            <person name="Tamlyn-Hall G."/>
            <person name="Tester J."/>
            <person name="Theaker A.J."/>
            <person name="Thomas D.W."/>
            <person name="Thorpe A."/>
            <person name="Tracey A."/>
            <person name="Tromans A."/>
            <person name="Tubby B."/>
            <person name="Wall M."/>
            <person name="Wallis J.M."/>
            <person name="West A.P."/>
            <person name="White S.S."/>
            <person name="Whitehead S.L."/>
            <person name="Whittaker H."/>
            <person name="Wild A."/>
            <person name="Willey D.J."/>
            <person name="Wilmer T.E."/>
            <person name="Wood J.M."/>
            <person name="Wray P.W."/>
            <person name="Wyatt J.C."/>
            <person name="Young L."/>
            <person name="Younger R.M."/>
            <person name="Bentley D.R."/>
            <person name="Coulson A."/>
            <person name="Durbin R.M."/>
            <person name="Hubbard T."/>
            <person name="Sulston J.E."/>
            <person name="Dunham I."/>
            <person name="Rogers J."/>
            <person name="Beck S."/>
        </authorList>
    </citation>
    <scope>NUCLEOTIDE SEQUENCE [LARGE SCALE GENOMIC DNA]</scope>
</reference>
<reference key="3">
    <citation type="submission" date="2005-09" db="EMBL/GenBank/DDBJ databases">
        <authorList>
            <person name="Mural R.J."/>
            <person name="Istrail S."/>
            <person name="Sutton G.G."/>
            <person name="Florea L."/>
            <person name="Halpern A.L."/>
            <person name="Mobarry C.M."/>
            <person name="Lippert R."/>
            <person name="Walenz B."/>
            <person name="Shatkay H."/>
            <person name="Dew I."/>
            <person name="Miller J.R."/>
            <person name="Flanigan M.J."/>
            <person name="Edwards N.J."/>
            <person name="Bolanos R."/>
            <person name="Fasulo D."/>
            <person name="Halldorsson B.V."/>
            <person name="Hannenhalli S."/>
            <person name="Turner R."/>
            <person name="Yooseph S."/>
            <person name="Lu F."/>
            <person name="Nusskern D.R."/>
            <person name="Shue B.C."/>
            <person name="Zheng X.H."/>
            <person name="Zhong F."/>
            <person name="Delcher A.L."/>
            <person name="Huson D.H."/>
            <person name="Kravitz S.A."/>
            <person name="Mouchard L."/>
            <person name="Reinert K."/>
            <person name="Remington K.A."/>
            <person name="Clark A.G."/>
            <person name="Waterman M.S."/>
            <person name="Eichler E.E."/>
            <person name="Adams M.D."/>
            <person name="Hunkapiller M.W."/>
            <person name="Myers E.W."/>
            <person name="Venter J.C."/>
        </authorList>
    </citation>
    <scope>NUCLEOTIDE SEQUENCE [LARGE SCALE GENOMIC DNA]</scope>
</reference>
<reference key="4">
    <citation type="journal article" date="2004" name="Genome Res.">
        <title>The status, quality, and expansion of the NIH full-length cDNA project: the Mammalian Gene Collection (MGC).</title>
        <authorList>
            <consortium name="The MGC Project Team"/>
        </authorList>
    </citation>
    <scope>NUCLEOTIDE SEQUENCE [LARGE SCALE MRNA] (ISOFORMS 1 AND 2)</scope>
    <source>
        <tissue>Kidney</tissue>
        <tissue>Ovary</tissue>
        <tissue>Skin</tissue>
    </source>
</reference>
<sequence>MHWGVGFASSRPCVVDLSWNQSISFFGWWAGSEEPFSFYGDIIAFPLQDYGGIMAGLGSDPWWKKTLYLTGGALLAAAAYLLHELLVIRKQQEIDSKDAIILHQFARPNNGVPSLSPFCLKMETYLRMADLPYQNYFGGKLSAQGKMPWIEYNHEKVSGTEFIIDFLEEKLGVNLNKNLGPHERAISRAVTKMVEEHFYWTLAYCQWVDNLNETRKMLSLSGGGPFSNLLRWVVCHITKGIVKREMHGHGIGRFSEEEIYMLMEKDMRSLAGLLGDKKYIMGPKLSTLDATVFGHLAQAMWTLPGTRPERLIKGELINLAMYCERIRRKFWPEWHHDDDNTIYESEESSEGSKTHTPLLDFSFYSRTETFEDEGAENSFSRTPDTDFTGHSLFDSDVDMDDYTDHEQCK</sequence>
<keyword id="KW-0025">Alternative splicing</keyword>
<keyword id="KW-0472">Membrane</keyword>
<keyword id="KW-1267">Proteomics identification</keyword>
<keyword id="KW-1185">Reference proteome</keyword>
<keyword id="KW-0812">Transmembrane</keyword>
<keyword id="KW-1133">Transmembrane helix</keyword>